<dbReference type="EMBL" id="AJ248283">
    <property type="status" value="NOT_ANNOTATED_CDS"/>
    <property type="molecule type" value="Genomic_DNA"/>
</dbReference>
<dbReference type="EMBL" id="HE613800">
    <property type="protein sequence ID" value="CCE69659.1"/>
    <property type="molecule type" value="Genomic_DNA"/>
</dbReference>
<dbReference type="RefSeq" id="WP_048146524.1">
    <property type="nucleotide sequence ID" value="NC_000868.1"/>
</dbReference>
<dbReference type="SMR" id="P60462"/>
<dbReference type="OrthoDB" id="43651at2157"/>
<dbReference type="PhylomeDB" id="P60462"/>
<dbReference type="Proteomes" id="UP000000810">
    <property type="component" value="Chromosome"/>
</dbReference>
<dbReference type="Proteomes" id="UP000009139">
    <property type="component" value="Chromosome"/>
</dbReference>
<dbReference type="GO" id="GO:0005886">
    <property type="term" value="C:plasma membrane"/>
    <property type="evidence" value="ECO:0007669"/>
    <property type="project" value="UniProtKB-SubCell"/>
</dbReference>
<dbReference type="GO" id="GO:0015031">
    <property type="term" value="P:protein transport"/>
    <property type="evidence" value="ECO:0007669"/>
    <property type="project" value="UniProtKB-UniRule"/>
</dbReference>
<dbReference type="HAMAP" id="MF_00751">
    <property type="entry name" value="SecG"/>
    <property type="match status" value="1"/>
</dbReference>
<dbReference type="InterPro" id="IPR023531">
    <property type="entry name" value="Preprot_translocase_SecG"/>
</dbReference>
<dbReference type="InterPro" id="IPR016482">
    <property type="entry name" value="SecG/Sec61-beta/Sbh"/>
</dbReference>
<dbReference type="NCBIfam" id="NF002318">
    <property type="entry name" value="PRK01253.1"/>
    <property type="match status" value="1"/>
</dbReference>
<dbReference type="Pfam" id="PF03911">
    <property type="entry name" value="Sec61_beta"/>
    <property type="match status" value="1"/>
</dbReference>
<keyword id="KW-1003">Cell membrane</keyword>
<keyword id="KW-0472">Membrane</keyword>
<keyword id="KW-0653">Protein transport</keyword>
<keyword id="KW-0811">Translocation</keyword>
<keyword id="KW-0812">Transmembrane</keyword>
<keyword id="KW-1133">Transmembrane helix</keyword>
<keyword id="KW-0813">Transport</keyword>
<organism>
    <name type="scientific">Pyrococcus abyssi (strain GE5 / Orsay)</name>
    <dbReference type="NCBI Taxonomy" id="272844"/>
    <lineage>
        <taxon>Archaea</taxon>
        <taxon>Methanobacteriati</taxon>
        <taxon>Methanobacteriota</taxon>
        <taxon>Thermococci</taxon>
        <taxon>Thermococcales</taxon>
        <taxon>Thermococcaceae</taxon>
        <taxon>Pyrococcus</taxon>
    </lineage>
</organism>
<name>SECG_PYRAB</name>
<comment type="function">
    <text evidence="1">Involved in protein export. The function of the beta subunit is unknown, but it may be involved in stabilization of the trimeric complex (By similarity).</text>
</comment>
<comment type="subunit">
    <text evidence="1">Component of the protein translocase complex. Heterotrimer consisting of alpha (SecY), beta (SecG) and gamma (SecE) subunits. Can form oligomers of the heterotrimer (By similarity).</text>
</comment>
<comment type="subcellular location">
    <subcellularLocation>
        <location evidence="1">Cell membrane</location>
        <topology evidence="1">Single-pass membrane protein</topology>
    </subcellularLocation>
</comment>
<comment type="similarity">
    <text evidence="2">Belongs to the SEC61-beta family.</text>
</comment>
<evidence type="ECO:0000250" key="1"/>
<evidence type="ECO:0000305" key="2"/>
<proteinExistence type="inferred from homology"/>
<reference key="1">
    <citation type="journal article" date="2003" name="Mol. Microbiol.">
        <title>An integrated analysis of the genome of the hyperthermophilic archaeon Pyrococcus abyssi.</title>
        <authorList>
            <person name="Cohen G.N."/>
            <person name="Barbe V."/>
            <person name="Flament D."/>
            <person name="Galperin M."/>
            <person name="Heilig R."/>
            <person name="Lecompte O."/>
            <person name="Poch O."/>
            <person name="Prieur D."/>
            <person name="Querellou J."/>
            <person name="Ripp R."/>
            <person name="Thierry J.-C."/>
            <person name="Van der Oost J."/>
            <person name="Weissenbach J."/>
            <person name="Zivanovic Y."/>
            <person name="Forterre P."/>
        </authorList>
    </citation>
    <scope>NUCLEOTIDE SEQUENCE [LARGE SCALE GENOMIC DNA]</scope>
    <source>
        <strain>GE5 / Orsay</strain>
    </source>
</reference>
<reference key="2">
    <citation type="journal article" date="2012" name="Curr. Microbiol.">
        <title>Re-annotation of two hyperthermophilic archaea Pyrococcus abyssi GE5 and Pyrococcus furiosus DSM 3638.</title>
        <authorList>
            <person name="Gao J."/>
            <person name="Wang J."/>
        </authorList>
    </citation>
    <scope>GENOME REANNOTATION</scope>
    <source>
        <strain>GE5 / Orsay</strain>
    </source>
</reference>
<protein>
    <recommendedName>
        <fullName>Preprotein translocase subunit SecG</fullName>
    </recommendedName>
    <alternativeName>
        <fullName>Protein transport protein Sec61 subunit beta homolog</fullName>
    </alternativeName>
</protein>
<feature type="chain" id="PRO_0000157273" description="Preprotein translocase subunit SecG">
    <location>
        <begin position="1"/>
        <end position="56"/>
    </location>
</feature>
<feature type="topological domain" description="Cytoplasmic" evidence="1">
    <location>
        <begin position="1"/>
        <end position="29"/>
    </location>
</feature>
<feature type="transmembrane region" description="Helical" evidence="1">
    <location>
        <begin position="30"/>
        <end position="49"/>
    </location>
</feature>
<feature type="topological domain" description="Extracellular" evidence="1">
    <location>
        <begin position="50"/>
        <end position="56"/>
    </location>
</feature>
<accession>P60462</accession>
<accession>G8ZHR6</accession>
<gene>
    <name type="primary">secG</name>
    <name type="ordered locus">PYRAB02815</name>
    <name type="ORF">PAB0191.1n</name>
</gene>
<sequence length="56" mass="6122">MAKEKTTLPPTGAGLMRFFDEDTRAIKITPKGAVALTLILIIFEIILHVVGPRIFG</sequence>